<evidence type="ECO:0000305" key="1"/>
<evidence type="ECO:0007829" key="2">
    <source>
        <dbReference type="PDB" id="3NUQ"/>
    </source>
</evidence>
<evidence type="ECO:0007829" key="3">
    <source>
        <dbReference type="PDB" id="3ONN"/>
    </source>
</evidence>
<evidence type="ECO:0007829" key="4">
    <source>
        <dbReference type="PDB" id="3OPX"/>
    </source>
</evidence>
<comment type="function">
    <text>Could be an enzyme that inactivates 6-azauracil by modifying it.</text>
</comment>
<comment type="similarity">
    <text evidence="1">Belongs to the SSM1 family.</text>
</comment>
<gene>
    <name type="primary">SDT1</name>
    <name type="synonym">SSM1</name>
    <name type="ordered locus">YGL224C</name>
</gene>
<sequence>MTVEYTASDLATYQNEVNEQIAKNKAHLESLTHPGSKVTFPIDQDISATPQNPNLKVFFFDIDNCLYKSSTRIHDLMQQSILRFFQTHLKLSPEDAHVLNNSYYKEYGLAIRGLVMFHKVNALEYNRLVDDSLPLQDILKPDIPLRNMLLRLRQSGKIDKLWLFTNAYKNHAIRCLRLLGIADLFDGLTYCDYSRTDTLVCKPHVKAFEKAMKESGLARYENAYFIDDSGKNIETGIKLGMKTCIHLVENEVNEILGQTPEGAIVISDILELPHVVSDLF</sequence>
<keyword id="KW-0002">3D-structure</keyword>
<keyword id="KW-1185">Reference proteome</keyword>
<accession>P53078</accession>
<accession>D6VVB1</accession>
<feature type="chain" id="PRO_0000072213" description="Suppressor of disruption of TFIIS">
    <location>
        <begin position="1"/>
        <end position="280"/>
    </location>
</feature>
<feature type="helix" evidence="2">
    <location>
        <begin position="6"/>
        <end position="29"/>
    </location>
</feature>
<feature type="strand" evidence="2">
    <location>
        <begin position="57"/>
        <end position="60"/>
    </location>
</feature>
<feature type="turn" evidence="2">
    <location>
        <begin position="63"/>
        <end position="65"/>
    </location>
</feature>
<feature type="helix" evidence="2">
    <location>
        <begin position="71"/>
        <end position="87"/>
    </location>
</feature>
<feature type="helix" evidence="2">
    <location>
        <begin position="93"/>
        <end position="106"/>
    </location>
</feature>
<feature type="helix" evidence="2">
    <location>
        <begin position="108"/>
        <end position="116"/>
    </location>
</feature>
<feature type="helix" evidence="2">
    <location>
        <begin position="122"/>
        <end position="129"/>
    </location>
</feature>
<feature type="turn" evidence="2">
    <location>
        <begin position="130"/>
        <end position="132"/>
    </location>
</feature>
<feature type="helix" evidence="2">
    <location>
        <begin position="135"/>
        <end position="137"/>
    </location>
</feature>
<feature type="helix" evidence="2">
    <location>
        <begin position="143"/>
        <end position="154"/>
    </location>
</feature>
<feature type="strand" evidence="2">
    <location>
        <begin position="155"/>
        <end position="157"/>
    </location>
</feature>
<feature type="strand" evidence="2">
    <location>
        <begin position="159"/>
        <end position="164"/>
    </location>
</feature>
<feature type="helix" evidence="2">
    <location>
        <begin position="169"/>
        <end position="178"/>
    </location>
</feature>
<feature type="strand" evidence="2">
    <location>
        <begin position="186"/>
        <end position="189"/>
    </location>
</feature>
<feature type="helix" evidence="2">
    <location>
        <begin position="205"/>
        <end position="215"/>
    </location>
</feature>
<feature type="helix" evidence="2">
    <location>
        <begin position="220"/>
        <end position="222"/>
    </location>
</feature>
<feature type="strand" evidence="2">
    <location>
        <begin position="223"/>
        <end position="228"/>
    </location>
</feature>
<feature type="helix" evidence="2">
    <location>
        <begin position="230"/>
        <end position="239"/>
    </location>
</feature>
<feature type="strand" evidence="2">
    <location>
        <begin position="242"/>
        <end position="247"/>
    </location>
</feature>
<feature type="strand" evidence="4">
    <location>
        <begin position="249"/>
        <end position="251"/>
    </location>
</feature>
<feature type="helix" evidence="3">
    <location>
        <begin position="254"/>
        <end position="256"/>
    </location>
</feature>
<feature type="strand" evidence="2">
    <location>
        <begin position="264"/>
        <end position="268"/>
    </location>
</feature>
<feature type="helix" evidence="2">
    <location>
        <begin position="269"/>
        <end position="274"/>
    </location>
</feature>
<feature type="helix" evidence="2">
    <location>
        <begin position="277"/>
        <end position="279"/>
    </location>
</feature>
<dbReference type="EMBL" id="D26043">
    <property type="protein sequence ID" value="BAB13723.1"/>
    <property type="molecule type" value="Genomic_DNA"/>
</dbReference>
<dbReference type="EMBL" id="Z72746">
    <property type="protein sequence ID" value="CAA96940.1"/>
    <property type="molecule type" value="Genomic_DNA"/>
</dbReference>
<dbReference type="EMBL" id="AY692802">
    <property type="protein sequence ID" value="AAT92821.1"/>
    <property type="molecule type" value="Genomic_DNA"/>
</dbReference>
<dbReference type="EMBL" id="BK006941">
    <property type="protein sequence ID" value="DAA07895.1"/>
    <property type="molecule type" value="Genomic_DNA"/>
</dbReference>
<dbReference type="PIR" id="S64246">
    <property type="entry name" value="S64246"/>
</dbReference>
<dbReference type="RefSeq" id="NP_011291.1">
    <property type="nucleotide sequence ID" value="NM_001181089.1"/>
</dbReference>
<dbReference type="PDB" id="3NUQ">
    <property type="method" value="X-ray"/>
    <property type="resolution" value="1.70 A"/>
    <property type="chains" value="A=1-280"/>
</dbReference>
<dbReference type="PDB" id="3ONN">
    <property type="method" value="X-ray"/>
    <property type="resolution" value="1.87 A"/>
    <property type="chains" value="A=26-280"/>
</dbReference>
<dbReference type="PDB" id="3OPX">
    <property type="method" value="X-ray"/>
    <property type="resolution" value="1.70 A"/>
    <property type="chains" value="A=26-280"/>
</dbReference>
<dbReference type="PDBsum" id="3NUQ"/>
<dbReference type="PDBsum" id="3ONN"/>
<dbReference type="PDBsum" id="3OPX"/>
<dbReference type="SMR" id="P53078"/>
<dbReference type="BioGRID" id="33035">
    <property type="interactions" value="42"/>
</dbReference>
<dbReference type="FunCoup" id="P53078">
    <property type="interactions" value="584"/>
</dbReference>
<dbReference type="STRING" id="4932.YGL224C"/>
<dbReference type="PaxDb" id="4932-YGL224C"/>
<dbReference type="PeptideAtlas" id="P53078"/>
<dbReference type="DNASU" id="852648"/>
<dbReference type="EnsemblFungi" id="YGL224C_mRNA">
    <property type="protein sequence ID" value="YGL224C"/>
    <property type="gene ID" value="YGL224C"/>
</dbReference>
<dbReference type="GeneID" id="852648"/>
<dbReference type="KEGG" id="sce:YGL224C"/>
<dbReference type="AGR" id="SGD:S000003192"/>
<dbReference type="SGD" id="S000003192">
    <property type="gene designation" value="SDT1"/>
</dbReference>
<dbReference type="VEuPathDB" id="FungiDB:YGL224C"/>
<dbReference type="eggNOG" id="KOG3109">
    <property type="taxonomic scope" value="Eukaryota"/>
</dbReference>
<dbReference type="GeneTree" id="ENSGT00940000176629"/>
<dbReference type="HOGENOM" id="CLU_059493_0_0_1"/>
<dbReference type="InParanoid" id="P53078"/>
<dbReference type="OMA" id="RHHTIDP"/>
<dbReference type="OrthoDB" id="1065058at2759"/>
<dbReference type="BioCyc" id="YEAST:G3O-30698-MONOMER"/>
<dbReference type="BioGRID-ORCS" id="852648">
    <property type="hits" value="2 hits in 10 CRISPR screens"/>
</dbReference>
<dbReference type="ChiTaRS" id="RPL1A">
    <property type="organism name" value="yeast"/>
</dbReference>
<dbReference type="EvolutionaryTrace" id="P53078"/>
<dbReference type="PRO" id="PR:P53078"/>
<dbReference type="Proteomes" id="UP000002311">
    <property type="component" value="Chromosome VII"/>
</dbReference>
<dbReference type="RNAct" id="P53078">
    <property type="molecule type" value="protein"/>
</dbReference>
<dbReference type="GO" id="GO:0008252">
    <property type="term" value="F:nucleotidase activity"/>
    <property type="evidence" value="ECO:0000314"/>
    <property type="project" value="SGD"/>
</dbReference>
<dbReference type="GO" id="GO:0009166">
    <property type="term" value="P:nucleotide catabolic process"/>
    <property type="evidence" value="ECO:0000318"/>
    <property type="project" value="GO_Central"/>
</dbReference>
<dbReference type="GO" id="GO:0006206">
    <property type="term" value="P:pyrimidine nucleobase metabolic process"/>
    <property type="evidence" value="ECO:0000315"/>
    <property type="project" value="SGD"/>
</dbReference>
<dbReference type="CDD" id="cd02604">
    <property type="entry name" value="HAD_5NT"/>
    <property type="match status" value="1"/>
</dbReference>
<dbReference type="FunFam" id="1.10.150.450:FF:000001">
    <property type="entry name" value="SDT1p Pyrimidine nucleotidase"/>
    <property type="match status" value="1"/>
</dbReference>
<dbReference type="Gene3D" id="1.10.150.450">
    <property type="match status" value="1"/>
</dbReference>
<dbReference type="Gene3D" id="3.40.50.1000">
    <property type="entry name" value="HAD superfamily/HAD-like"/>
    <property type="match status" value="1"/>
</dbReference>
<dbReference type="InterPro" id="IPR036412">
    <property type="entry name" value="HAD-like_sf"/>
</dbReference>
<dbReference type="InterPro" id="IPR006439">
    <property type="entry name" value="HAD-SF_hydro_IA"/>
</dbReference>
<dbReference type="InterPro" id="IPR023214">
    <property type="entry name" value="HAD_sf"/>
</dbReference>
<dbReference type="InterPro" id="IPR010237">
    <property type="entry name" value="Pyr-5-nucltdase"/>
</dbReference>
<dbReference type="InterPro" id="IPR052791">
    <property type="entry name" value="SSM1_domain"/>
</dbReference>
<dbReference type="NCBIfam" id="TIGR01509">
    <property type="entry name" value="HAD-SF-IA-v3"/>
    <property type="match status" value="1"/>
</dbReference>
<dbReference type="NCBIfam" id="TIGR01993">
    <property type="entry name" value="Pyr-5-nucltdase"/>
    <property type="match status" value="1"/>
</dbReference>
<dbReference type="PANTHER" id="PTHR47438">
    <property type="entry name" value="PHOSPHATE METABOLISM PROTEIN 8-RELATED"/>
    <property type="match status" value="1"/>
</dbReference>
<dbReference type="PANTHER" id="PTHR47438:SF1">
    <property type="entry name" value="PHOSPHATE METABOLISM PROTEIN 8-RELATED"/>
    <property type="match status" value="1"/>
</dbReference>
<dbReference type="Pfam" id="PF00702">
    <property type="entry name" value="Hydrolase"/>
    <property type="match status" value="1"/>
</dbReference>
<dbReference type="SFLD" id="SFLDG01132">
    <property type="entry name" value="C1.5.3:_5'-Nucleotidase_Like"/>
    <property type="match status" value="1"/>
</dbReference>
<dbReference type="SFLD" id="SFLDS00003">
    <property type="entry name" value="Haloacid_Dehalogenase"/>
    <property type="match status" value="1"/>
</dbReference>
<dbReference type="SUPFAM" id="SSF56784">
    <property type="entry name" value="HAD-like"/>
    <property type="match status" value="1"/>
</dbReference>
<proteinExistence type="evidence at protein level"/>
<organism>
    <name type="scientific">Saccharomyces cerevisiae (strain ATCC 204508 / S288c)</name>
    <name type="common">Baker's yeast</name>
    <dbReference type="NCBI Taxonomy" id="559292"/>
    <lineage>
        <taxon>Eukaryota</taxon>
        <taxon>Fungi</taxon>
        <taxon>Dikarya</taxon>
        <taxon>Ascomycota</taxon>
        <taxon>Saccharomycotina</taxon>
        <taxon>Saccharomycetes</taxon>
        <taxon>Saccharomycetales</taxon>
        <taxon>Saccharomycetaceae</taxon>
        <taxon>Saccharomyces</taxon>
    </lineage>
</organism>
<protein>
    <recommendedName>
        <fullName>Suppressor of disruption of TFIIS</fullName>
    </recommendedName>
</protein>
<name>SDT1_YEAST</name>
<reference key="1">
    <citation type="journal article" date="2000" name="J. Biol. Chem.">
        <title>Transcription elongation factor S-II confers yeast resistance to 6-azauracil by enhancing expression of the SSM1 gene.</title>
        <authorList>
            <person name="Shimoaraiso M."/>
            <person name="Nakanishi T."/>
            <person name="Kubo T."/>
            <person name="Natori S."/>
        </authorList>
    </citation>
    <scope>NUCLEOTIDE SEQUENCE [GENOMIC DNA]</scope>
</reference>
<reference key="2">
    <citation type="journal article" date="1997" name="Yeast">
        <title>Sequence analysis of 203 kilobases from Saccharomyces cerevisiae chromosome VII.</title>
        <authorList>
            <person name="Rieger M."/>
            <person name="Brueckner M."/>
            <person name="Schaefer M."/>
            <person name="Mueller-Auer S."/>
        </authorList>
    </citation>
    <scope>NUCLEOTIDE SEQUENCE [GENOMIC DNA]</scope>
    <source>
        <strain>ATCC 204508 / S288c</strain>
    </source>
</reference>
<reference key="3">
    <citation type="journal article" date="1997" name="Nature">
        <title>The nucleotide sequence of Saccharomyces cerevisiae chromosome VII.</title>
        <authorList>
            <person name="Tettelin H."/>
            <person name="Agostoni-Carbone M.L."/>
            <person name="Albermann K."/>
            <person name="Albers M."/>
            <person name="Arroyo J."/>
            <person name="Backes U."/>
            <person name="Barreiros T."/>
            <person name="Bertani I."/>
            <person name="Bjourson A.J."/>
            <person name="Brueckner M."/>
            <person name="Bruschi C.V."/>
            <person name="Carignani G."/>
            <person name="Castagnoli L."/>
            <person name="Cerdan E."/>
            <person name="Clemente M.L."/>
            <person name="Coblenz A."/>
            <person name="Coglievina M."/>
            <person name="Coissac E."/>
            <person name="Defoor E."/>
            <person name="Del Bino S."/>
            <person name="Delius H."/>
            <person name="Delneri D."/>
            <person name="de Wergifosse P."/>
            <person name="Dujon B."/>
            <person name="Durand P."/>
            <person name="Entian K.-D."/>
            <person name="Eraso P."/>
            <person name="Escribano V."/>
            <person name="Fabiani L."/>
            <person name="Fartmann B."/>
            <person name="Feroli F."/>
            <person name="Feuermann M."/>
            <person name="Frontali L."/>
            <person name="Garcia-Gonzalez M."/>
            <person name="Garcia-Saez M.I."/>
            <person name="Goffeau A."/>
            <person name="Guerreiro P."/>
            <person name="Hani J."/>
            <person name="Hansen M."/>
            <person name="Hebling U."/>
            <person name="Hernandez K."/>
            <person name="Heumann K."/>
            <person name="Hilger F."/>
            <person name="Hofmann B."/>
            <person name="Indge K.J."/>
            <person name="James C.M."/>
            <person name="Klima R."/>
            <person name="Koetter P."/>
            <person name="Kramer B."/>
            <person name="Kramer W."/>
            <person name="Lauquin G."/>
            <person name="Leuther H."/>
            <person name="Louis E.J."/>
            <person name="Maillier E."/>
            <person name="Marconi A."/>
            <person name="Martegani E."/>
            <person name="Mazon M.J."/>
            <person name="Mazzoni C."/>
            <person name="McReynolds A.D.K."/>
            <person name="Melchioretto P."/>
            <person name="Mewes H.-W."/>
            <person name="Minenkova O."/>
            <person name="Mueller-Auer S."/>
            <person name="Nawrocki A."/>
            <person name="Netter P."/>
            <person name="Neu R."/>
            <person name="Nombela C."/>
            <person name="Oliver S.G."/>
            <person name="Panzeri L."/>
            <person name="Paoluzi S."/>
            <person name="Plevani P."/>
            <person name="Portetelle D."/>
            <person name="Portillo F."/>
            <person name="Potier S."/>
            <person name="Purnelle B."/>
            <person name="Rieger M."/>
            <person name="Riles L."/>
            <person name="Rinaldi T."/>
            <person name="Robben J."/>
            <person name="Rodrigues-Pousada C."/>
            <person name="Rodriguez-Belmonte E."/>
            <person name="Rodriguez-Torres A.M."/>
            <person name="Rose M."/>
            <person name="Ruzzi M."/>
            <person name="Saliola M."/>
            <person name="Sanchez-Perez M."/>
            <person name="Schaefer B."/>
            <person name="Schaefer M."/>
            <person name="Scharfe M."/>
            <person name="Schmidheini T."/>
            <person name="Schreer A."/>
            <person name="Skala J."/>
            <person name="Souciet J.-L."/>
            <person name="Steensma H.Y."/>
            <person name="Talla E."/>
            <person name="Thierry A."/>
            <person name="Vandenbol M."/>
            <person name="van der Aart Q.J.M."/>
            <person name="Van Dyck L."/>
            <person name="Vanoni M."/>
            <person name="Verhasselt P."/>
            <person name="Voet M."/>
            <person name="Volckaert G."/>
            <person name="Wambutt R."/>
            <person name="Watson M.D."/>
            <person name="Weber N."/>
            <person name="Wedler E."/>
            <person name="Wedler H."/>
            <person name="Wipfli P."/>
            <person name="Wolf K."/>
            <person name="Wright L.F."/>
            <person name="Zaccaria P."/>
            <person name="Zimmermann M."/>
            <person name="Zollner A."/>
            <person name="Kleine K."/>
        </authorList>
    </citation>
    <scope>NUCLEOTIDE SEQUENCE [LARGE SCALE GENOMIC DNA]</scope>
    <source>
        <strain>ATCC 204508 / S288c</strain>
    </source>
</reference>
<reference key="4">
    <citation type="journal article" date="2014" name="G3 (Bethesda)">
        <title>The reference genome sequence of Saccharomyces cerevisiae: Then and now.</title>
        <authorList>
            <person name="Engel S.R."/>
            <person name="Dietrich F.S."/>
            <person name="Fisk D.G."/>
            <person name="Binkley G."/>
            <person name="Balakrishnan R."/>
            <person name="Costanzo M.C."/>
            <person name="Dwight S.S."/>
            <person name="Hitz B.C."/>
            <person name="Karra K."/>
            <person name="Nash R.S."/>
            <person name="Weng S."/>
            <person name="Wong E.D."/>
            <person name="Lloyd P."/>
            <person name="Skrzypek M.S."/>
            <person name="Miyasato S.R."/>
            <person name="Simison M."/>
            <person name="Cherry J.M."/>
        </authorList>
    </citation>
    <scope>GENOME REANNOTATION</scope>
    <source>
        <strain>ATCC 204508 / S288c</strain>
    </source>
</reference>
<reference key="5">
    <citation type="journal article" date="2007" name="Genome Res.">
        <title>Approaching a complete repository of sequence-verified protein-encoding clones for Saccharomyces cerevisiae.</title>
        <authorList>
            <person name="Hu Y."/>
            <person name="Rolfs A."/>
            <person name="Bhullar B."/>
            <person name="Murthy T.V.S."/>
            <person name="Zhu C."/>
            <person name="Berger M.F."/>
            <person name="Camargo A.A."/>
            <person name="Kelley F."/>
            <person name="McCarron S."/>
            <person name="Jepson D."/>
            <person name="Richardson A."/>
            <person name="Raphael J."/>
            <person name="Moreira D."/>
            <person name="Taycher E."/>
            <person name="Zuo D."/>
            <person name="Mohr S."/>
            <person name="Kane M.F."/>
            <person name="Williamson J."/>
            <person name="Simpson A.J.G."/>
            <person name="Bulyk M.L."/>
            <person name="Harlow E."/>
            <person name="Marsischky G."/>
            <person name="Kolodner R.D."/>
            <person name="LaBaer J."/>
        </authorList>
    </citation>
    <scope>NUCLEOTIDE SEQUENCE [GENOMIC DNA]</scope>
    <source>
        <strain>ATCC 204508 / S288c</strain>
    </source>
</reference>